<evidence type="ECO:0000255" key="1">
    <source>
        <dbReference type="HAMAP-Rule" id="MF_01200"/>
    </source>
</evidence>
<comment type="function">
    <text evidence="1">Catalyzes the decarboxylation of orotidine 5'-monophosphate (OMP) to uridine 5'-monophosphate (UMP).</text>
</comment>
<comment type="catalytic activity">
    <reaction evidence="1">
        <text>orotidine 5'-phosphate + H(+) = UMP + CO2</text>
        <dbReference type="Rhea" id="RHEA:11596"/>
        <dbReference type="ChEBI" id="CHEBI:15378"/>
        <dbReference type="ChEBI" id="CHEBI:16526"/>
        <dbReference type="ChEBI" id="CHEBI:57538"/>
        <dbReference type="ChEBI" id="CHEBI:57865"/>
        <dbReference type="EC" id="4.1.1.23"/>
    </reaction>
</comment>
<comment type="pathway">
    <text evidence="1">Pyrimidine metabolism; UMP biosynthesis via de novo pathway; UMP from orotate: step 2/2.</text>
</comment>
<comment type="subunit">
    <text evidence="1">Homodimer.</text>
</comment>
<comment type="similarity">
    <text evidence="1">Belongs to the OMP decarboxylase family. Type 1 subfamily.</text>
</comment>
<sequence>MNPLISDFQTPQQRTPVIVALDFSNEKDTLGFVRNLDPTLCQIKIGKELFTATGRNLAESLINQGFKLFLDLKYHDIPHTVAQACKVAADMGVWMVDMHASGGRRMMEAAAEAVAGYGTKPLLIGVTVLTSMEQSDLAEIGLNTAPEEQVIRLAKLAQSSGLDGVVCSAQEAAPLRRELGQDFVLVTPGIRLDVADNNDDQRRIMTPAEALAAGSTYLVMGRPVTQAADPVAVLREVNRVANLEAN</sequence>
<organism>
    <name type="scientific">Neisseria meningitidis serogroup A / serotype 4A (strain DSM 15465 / Z2491)</name>
    <dbReference type="NCBI Taxonomy" id="122587"/>
    <lineage>
        <taxon>Bacteria</taxon>
        <taxon>Pseudomonadati</taxon>
        <taxon>Pseudomonadota</taxon>
        <taxon>Betaproteobacteria</taxon>
        <taxon>Neisseriales</taxon>
        <taxon>Neisseriaceae</taxon>
        <taxon>Neisseria</taxon>
    </lineage>
</organism>
<accession>Q9JV18</accession>
<accession>A1IR69</accession>
<name>PYRF_NEIMA</name>
<protein>
    <recommendedName>
        <fullName evidence="1">Orotidine 5'-phosphate decarboxylase</fullName>
        <ecNumber evidence="1">4.1.1.23</ecNumber>
    </recommendedName>
    <alternativeName>
        <fullName evidence="1">OMP decarboxylase</fullName>
        <shortName evidence="1">OMPDCase</shortName>
        <shortName evidence="1">OMPdecase</shortName>
    </alternativeName>
</protein>
<proteinExistence type="inferred from homology"/>
<gene>
    <name evidence="1" type="primary">pyrF</name>
    <name type="ordered locus">NMA1033</name>
</gene>
<keyword id="KW-0210">Decarboxylase</keyword>
<keyword id="KW-0456">Lyase</keyword>
<keyword id="KW-0665">Pyrimidine biosynthesis</keyword>
<reference key="1">
    <citation type="journal article" date="2000" name="Nature">
        <title>Complete DNA sequence of a serogroup A strain of Neisseria meningitidis Z2491.</title>
        <authorList>
            <person name="Parkhill J."/>
            <person name="Achtman M."/>
            <person name="James K.D."/>
            <person name="Bentley S.D."/>
            <person name="Churcher C.M."/>
            <person name="Klee S.R."/>
            <person name="Morelli G."/>
            <person name="Basham D."/>
            <person name="Brown D."/>
            <person name="Chillingworth T."/>
            <person name="Davies R.M."/>
            <person name="Davis P."/>
            <person name="Devlin K."/>
            <person name="Feltwell T."/>
            <person name="Hamlin N."/>
            <person name="Holroyd S."/>
            <person name="Jagels K."/>
            <person name="Leather S."/>
            <person name="Moule S."/>
            <person name="Mungall K.L."/>
            <person name="Quail M.A."/>
            <person name="Rajandream M.A."/>
            <person name="Rutherford K.M."/>
            <person name="Simmonds M."/>
            <person name="Skelton J."/>
            <person name="Whitehead S."/>
            <person name="Spratt B.G."/>
            <person name="Barrell B.G."/>
        </authorList>
    </citation>
    <scope>NUCLEOTIDE SEQUENCE [LARGE SCALE GENOMIC DNA]</scope>
    <source>
        <strain>DSM 15465 / Z2491</strain>
    </source>
</reference>
<dbReference type="EC" id="4.1.1.23" evidence="1"/>
<dbReference type="EMBL" id="AL157959">
    <property type="protein sequence ID" value="CAM08253.1"/>
    <property type="molecule type" value="Genomic_DNA"/>
</dbReference>
<dbReference type="PIR" id="G81951">
    <property type="entry name" value="G81951"/>
</dbReference>
<dbReference type="RefSeq" id="WP_002238979.1">
    <property type="nucleotide sequence ID" value="NC_003116.1"/>
</dbReference>
<dbReference type="SMR" id="Q9JV18"/>
<dbReference type="EnsemblBacteria" id="CAM08253">
    <property type="protein sequence ID" value="CAM08253"/>
    <property type="gene ID" value="NMA1033"/>
</dbReference>
<dbReference type="KEGG" id="nma:NMA1033"/>
<dbReference type="HOGENOM" id="CLU_067069_0_0_4"/>
<dbReference type="UniPathway" id="UPA00070">
    <property type="reaction ID" value="UER00120"/>
</dbReference>
<dbReference type="Proteomes" id="UP000000626">
    <property type="component" value="Chromosome"/>
</dbReference>
<dbReference type="GO" id="GO:0005829">
    <property type="term" value="C:cytosol"/>
    <property type="evidence" value="ECO:0007669"/>
    <property type="project" value="TreeGrafter"/>
</dbReference>
<dbReference type="GO" id="GO:0004590">
    <property type="term" value="F:orotidine-5'-phosphate decarboxylase activity"/>
    <property type="evidence" value="ECO:0007669"/>
    <property type="project" value="UniProtKB-UniRule"/>
</dbReference>
<dbReference type="GO" id="GO:0006207">
    <property type="term" value="P:'de novo' pyrimidine nucleobase biosynthetic process"/>
    <property type="evidence" value="ECO:0007669"/>
    <property type="project" value="InterPro"/>
</dbReference>
<dbReference type="GO" id="GO:0044205">
    <property type="term" value="P:'de novo' UMP biosynthetic process"/>
    <property type="evidence" value="ECO:0007669"/>
    <property type="project" value="UniProtKB-UniRule"/>
</dbReference>
<dbReference type="CDD" id="cd04725">
    <property type="entry name" value="OMP_decarboxylase_like"/>
    <property type="match status" value="1"/>
</dbReference>
<dbReference type="FunFam" id="3.20.20.70:FF:000015">
    <property type="entry name" value="Orotidine 5'-phosphate decarboxylase"/>
    <property type="match status" value="1"/>
</dbReference>
<dbReference type="Gene3D" id="3.20.20.70">
    <property type="entry name" value="Aldolase class I"/>
    <property type="match status" value="1"/>
</dbReference>
<dbReference type="HAMAP" id="MF_01200_B">
    <property type="entry name" value="OMPdecase_type1_B"/>
    <property type="match status" value="1"/>
</dbReference>
<dbReference type="InterPro" id="IPR013785">
    <property type="entry name" value="Aldolase_TIM"/>
</dbReference>
<dbReference type="InterPro" id="IPR014732">
    <property type="entry name" value="OMPdecase"/>
</dbReference>
<dbReference type="InterPro" id="IPR018089">
    <property type="entry name" value="OMPdecase_AS"/>
</dbReference>
<dbReference type="InterPro" id="IPR047596">
    <property type="entry name" value="OMPdecase_bac"/>
</dbReference>
<dbReference type="InterPro" id="IPR001754">
    <property type="entry name" value="OMPdeCOase_dom"/>
</dbReference>
<dbReference type="InterPro" id="IPR011060">
    <property type="entry name" value="RibuloseP-bd_barrel"/>
</dbReference>
<dbReference type="NCBIfam" id="NF001273">
    <property type="entry name" value="PRK00230.1"/>
    <property type="match status" value="1"/>
</dbReference>
<dbReference type="NCBIfam" id="TIGR01740">
    <property type="entry name" value="pyrF"/>
    <property type="match status" value="1"/>
</dbReference>
<dbReference type="PANTHER" id="PTHR32119">
    <property type="entry name" value="OROTIDINE 5'-PHOSPHATE DECARBOXYLASE"/>
    <property type="match status" value="1"/>
</dbReference>
<dbReference type="PANTHER" id="PTHR32119:SF2">
    <property type="entry name" value="OROTIDINE 5'-PHOSPHATE DECARBOXYLASE"/>
    <property type="match status" value="1"/>
</dbReference>
<dbReference type="Pfam" id="PF00215">
    <property type="entry name" value="OMPdecase"/>
    <property type="match status" value="1"/>
</dbReference>
<dbReference type="SMART" id="SM00934">
    <property type="entry name" value="OMPdecase"/>
    <property type="match status" value="1"/>
</dbReference>
<dbReference type="SUPFAM" id="SSF51366">
    <property type="entry name" value="Ribulose-phoshate binding barrel"/>
    <property type="match status" value="1"/>
</dbReference>
<dbReference type="PROSITE" id="PS00156">
    <property type="entry name" value="OMPDECASE"/>
    <property type="match status" value="1"/>
</dbReference>
<feature type="chain" id="PRO_0000134556" description="Orotidine 5'-phosphate decarboxylase">
    <location>
        <begin position="1"/>
        <end position="246"/>
    </location>
</feature>
<feature type="active site" description="Proton donor" evidence="1">
    <location>
        <position position="73"/>
    </location>
</feature>
<feature type="binding site" evidence="1">
    <location>
        <position position="22"/>
    </location>
    <ligand>
        <name>substrate</name>
    </ligand>
</feature>
<feature type="binding site" evidence="1">
    <location>
        <position position="44"/>
    </location>
    <ligand>
        <name>substrate</name>
    </ligand>
</feature>
<feature type="binding site" evidence="1">
    <location>
        <begin position="71"/>
        <end position="80"/>
    </location>
    <ligand>
        <name>substrate</name>
    </ligand>
</feature>
<feature type="binding site" evidence="1">
    <location>
        <position position="130"/>
    </location>
    <ligand>
        <name>substrate</name>
    </ligand>
</feature>
<feature type="binding site" evidence="1">
    <location>
        <position position="191"/>
    </location>
    <ligand>
        <name>substrate</name>
    </ligand>
</feature>
<feature type="binding site" evidence="1">
    <location>
        <position position="201"/>
    </location>
    <ligand>
        <name>substrate</name>
    </ligand>
</feature>
<feature type="binding site" evidence="1">
    <location>
        <position position="221"/>
    </location>
    <ligand>
        <name>substrate</name>
    </ligand>
</feature>
<feature type="binding site" evidence="1">
    <location>
        <position position="222"/>
    </location>
    <ligand>
        <name>substrate</name>
    </ligand>
</feature>